<feature type="initiator methionine" description="Removed" evidence="2">
    <location>
        <position position="1"/>
    </location>
</feature>
<feature type="chain" id="PRO_0000128375" description="T-complex protein 1 subunit theta">
    <location>
        <begin position="2"/>
        <end position="548"/>
    </location>
</feature>
<feature type="region of interest" description="Disordered" evidence="3">
    <location>
        <begin position="529"/>
        <end position="548"/>
    </location>
</feature>
<feature type="binding site" evidence="2">
    <location>
        <position position="47"/>
    </location>
    <ligand>
        <name>ADP</name>
        <dbReference type="ChEBI" id="CHEBI:456216"/>
    </ligand>
</feature>
<feature type="binding site" evidence="2">
    <location>
        <position position="48"/>
    </location>
    <ligand>
        <name>ADP</name>
        <dbReference type="ChEBI" id="CHEBI:456216"/>
    </ligand>
</feature>
<feature type="binding site" evidence="2">
    <location>
        <position position="99"/>
    </location>
    <ligand>
        <name>Mg(2+)</name>
        <dbReference type="ChEBI" id="CHEBI:18420"/>
    </ligand>
</feature>
<feature type="binding site" evidence="2">
    <location>
        <position position="100"/>
    </location>
    <ligand>
        <name>ADP</name>
        <dbReference type="ChEBI" id="CHEBI:456216"/>
    </ligand>
</feature>
<feature type="binding site" evidence="2">
    <location>
        <position position="100"/>
    </location>
    <ligand>
        <name>ATP</name>
        <dbReference type="ChEBI" id="CHEBI:30616"/>
    </ligand>
</feature>
<feature type="binding site" evidence="2">
    <location>
        <position position="101"/>
    </location>
    <ligand>
        <name>ADP</name>
        <dbReference type="ChEBI" id="CHEBI:456216"/>
    </ligand>
</feature>
<feature type="binding site" evidence="2">
    <location>
        <position position="101"/>
    </location>
    <ligand>
        <name>ATP</name>
        <dbReference type="ChEBI" id="CHEBI:30616"/>
    </ligand>
</feature>
<feature type="binding site" evidence="2">
    <location>
        <position position="102"/>
    </location>
    <ligand>
        <name>ADP</name>
        <dbReference type="ChEBI" id="CHEBI:456216"/>
    </ligand>
</feature>
<feature type="binding site" evidence="2">
    <location>
        <position position="102"/>
    </location>
    <ligand>
        <name>ATP</name>
        <dbReference type="ChEBI" id="CHEBI:30616"/>
    </ligand>
</feature>
<feature type="binding site" evidence="2">
    <location>
        <position position="103"/>
    </location>
    <ligand>
        <name>ADP</name>
        <dbReference type="ChEBI" id="CHEBI:456216"/>
    </ligand>
</feature>
<feature type="binding site" evidence="2">
    <location>
        <position position="169"/>
    </location>
    <ligand>
        <name>ADP</name>
        <dbReference type="ChEBI" id="CHEBI:456216"/>
    </ligand>
</feature>
<feature type="binding site" evidence="2">
    <location>
        <position position="170"/>
    </location>
    <ligand>
        <name>ADP</name>
        <dbReference type="ChEBI" id="CHEBI:456216"/>
    </ligand>
</feature>
<feature type="binding site" evidence="2">
    <location>
        <position position="170"/>
    </location>
    <ligand>
        <name>ATP</name>
        <dbReference type="ChEBI" id="CHEBI:30616"/>
    </ligand>
</feature>
<feature type="binding site" evidence="2">
    <location>
        <position position="171"/>
    </location>
    <ligand>
        <name>ADP</name>
        <dbReference type="ChEBI" id="CHEBI:456216"/>
    </ligand>
</feature>
<feature type="binding site" evidence="2">
    <location>
        <position position="171"/>
    </location>
    <ligand>
        <name>ATP</name>
        <dbReference type="ChEBI" id="CHEBI:30616"/>
    </ligand>
</feature>
<feature type="binding site" evidence="2">
    <location>
        <position position="412"/>
    </location>
    <ligand>
        <name>ADP</name>
        <dbReference type="ChEBI" id="CHEBI:456216"/>
    </ligand>
</feature>
<feature type="binding site" evidence="2">
    <location>
        <position position="412"/>
    </location>
    <ligand>
        <name>ATP</name>
        <dbReference type="ChEBI" id="CHEBI:30616"/>
    </ligand>
</feature>
<feature type="binding site" evidence="2">
    <location>
        <position position="499"/>
    </location>
    <ligand>
        <name>ADP</name>
        <dbReference type="ChEBI" id="CHEBI:456216"/>
    </ligand>
</feature>
<feature type="binding site" evidence="2">
    <location>
        <position position="499"/>
    </location>
    <ligand>
        <name>ATP</name>
        <dbReference type="ChEBI" id="CHEBI:30616"/>
    </ligand>
</feature>
<feature type="binding site" evidence="2">
    <location>
        <position position="504"/>
    </location>
    <ligand>
        <name>ATP</name>
        <dbReference type="ChEBI" id="CHEBI:30616"/>
    </ligand>
</feature>
<feature type="modified residue" description="N-acetylalanine" evidence="2">
    <location>
        <position position="2"/>
    </location>
</feature>
<feature type="modified residue" description="Phosphoserine" evidence="2">
    <location>
        <position position="23"/>
    </location>
</feature>
<feature type="modified residue" description="Phosphotyrosine" evidence="2">
    <location>
        <position position="30"/>
    </location>
</feature>
<feature type="modified residue" description="Phosphoserine" evidence="2">
    <location>
        <position position="162"/>
    </location>
</feature>
<feature type="modified residue" description="Phosphoserine" evidence="2">
    <location>
        <position position="213"/>
    </location>
</feature>
<feature type="modified residue" description="Phosphoserine" evidence="2">
    <location>
        <position position="269"/>
    </location>
</feature>
<feature type="modified residue" description="Phosphoserine" evidence="2">
    <location>
        <position position="317"/>
    </location>
</feature>
<feature type="modified residue" description="N6-acetyllysine" evidence="2">
    <location>
        <position position="318"/>
    </location>
</feature>
<feature type="modified residue" description="N6-acetyllysine" evidence="2">
    <location>
        <position position="400"/>
    </location>
</feature>
<feature type="modified residue" description="N6-acetyllysine" evidence="2">
    <location>
        <position position="466"/>
    </location>
</feature>
<feature type="modified residue" description="Phosphotyrosine" evidence="2">
    <location>
        <position position="505"/>
    </location>
</feature>
<feature type="modified residue" description="Phosphoserine" evidence="2">
    <location>
        <position position="537"/>
    </location>
</feature>
<feature type="cross-link" description="Glycyl lysine isopeptide (Lys-Gly) (interchain with G-Cter in SUMO2)" evidence="2">
    <location>
        <position position="224"/>
    </location>
</feature>
<feature type="cross-link" description="Glycyl lysine isopeptide (Lys-Gly) (interchain with G-Cter in SUMO2)" evidence="2">
    <location>
        <position position="254"/>
    </location>
</feature>
<feature type="cross-link" description="Glycyl lysine isopeptide (Lys-Gly) (interchain with G-Cter in SUMO2)" evidence="2">
    <location>
        <position position="260"/>
    </location>
</feature>
<feature type="cross-link" description="Glycyl lysine isopeptide (Lys-Gly) (interchain with G-Cter in SUMO1)" evidence="2">
    <location>
        <position position="459"/>
    </location>
</feature>
<feature type="cross-link" description="Glycyl lysine isopeptide (Lys-Gly) (interchain with G-Cter in SUMO2)" evidence="2">
    <location>
        <position position="534"/>
    </location>
</feature>
<feature type="cross-link" description="Glycyl lysine isopeptide (Lys-Gly) (interchain with G-Cter in SUMO2)" evidence="2">
    <location>
        <position position="539"/>
    </location>
</feature>
<comment type="function">
    <text evidence="2">Component of the chaperonin-containing T-complex (TRiC), a molecular chaperone complex that assists the folding of actin, tubulin and other proteins upon ATP hydrolysis. The TRiC complex mediates the folding of WRAP53/TCAB1, thereby regulating telomere maintenance. As part of the TRiC complex may play a role in the assembly of BBSome, a complex involved in ciliogenesis regulating transports vesicles to the cilia.</text>
</comment>
<comment type="catalytic activity">
    <reaction evidence="2">
        <text>ATP + H2O = ADP + phosphate + H(+)</text>
        <dbReference type="Rhea" id="RHEA:13065"/>
        <dbReference type="ChEBI" id="CHEBI:15377"/>
        <dbReference type="ChEBI" id="CHEBI:15378"/>
        <dbReference type="ChEBI" id="CHEBI:30616"/>
        <dbReference type="ChEBI" id="CHEBI:43474"/>
        <dbReference type="ChEBI" id="CHEBI:456216"/>
    </reaction>
</comment>
<comment type="subunit">
    <text evidence="1 2">Component of the chaperonin-containing T-complex (TRiC), a hexadecamer composed of two identical back-to-back stacked rings enclosing a protein folding chamber. Each ring is made up of eight different subunits: TCP1/CCT1, CCT2, CCT3, CCT4, CCT5, CCT6A/CCT6, CCT7, CCT8. Interacts with PACRG (By similarity). Interacts with DNAAF4 (By similarity). Interacts with synaptic plasticity regulator PANTS (By similarity).</text>
</comment>
<comment type="subcellular location">
    <subcellularLocation>
        <location evidence="2">Cytoplasm</location>
    </subcellularLocation>
    <subcellularLocation>
        <location evidence="2">Cytoplasm</location>
        <location evidence="2">Cytoskeleton</location>
        <location evidence="2">Microtubule organizing center</location>
        <location evidence="2">Centrosome</location>
    </subcellularLocation>
    <subcellularLocation>
        <location evidence="1">Cytoplasm</location>
        <location evidence="1">Cytoskeleton</location>
        <location evidence="1">Cilium basal body</location>
    </subcellularLocation>
</comment>
<comment type="similarity">
    <text evidence="4">Belongs to the TCP-1 chaperonin family.</text>
</comment>
<reference key="1">
    <citation type="submission" date="2004-11" db="EMBL/GenBank/DDBJ databases">
        <authorList>
            <consortium name="The German cDNA consortium"/>
        </authorList>
    </citation>
    <scope>NUCLEOTIDE SEQUENCE [LARGE SCALE MRNA]</scope>
    <source>
        <tissue>Kidney</tissue>
    </source>
</reference>
<proteinExistence type="evidence at transcript level"/>
<evidence type="ECO:0000250" key="1">
    <source>
        <dbReference type="UniProtKB" id="P42932"/>
    </source>
</evidence>
<evidence type="ECO:0000250" key="2">
    <source>
        <dbReference type="UniProtKB" id="P50990"/>
    </source>
</evidence>
<evidence type="ECO:0000256" key="3">
    <source>
        <dbReference type="SAM" id="MobiDB-lite"/>
    </source>
</evidence>
<evidence type="ECO:0000305" key="4"/>
<name>TCPQ_PONAB</name>
<protein>
    <recommendedName>
        <fullName>T-complex protein 1 subunit theta</fullName>
        <shortName>TCP-1-theta</shortName>
        <ecNumber evidence="2">3.6.1.-</ecNumber>
    </recommendedName>
    <alternativeName>
        <fullName>CCT-theta</fullName>
    </alternativeName>
</protein>
<sequence length="548" mass="59621">MALHVPKAPGFAQMLKEGAKHFSGLEEAVYRNIQACKELAQTTRTAYGPNGMNKMVINHLEKLFVTNDAATILRELEVQHPAAKMIVMASHMQEQEVGDGTNFVLVFAGALLELAEELLRIGLSVSEVIEGYEIACRKAHEILPNLVCCSAKNLRDIDEVSSLLRTSIMSKQYGNEVFLAKLIAQACVSIFPDSGHFNVDNIRVCKILGSGISSSSVLHGMVFKKETEGDVTSVKDAKIAVYSCPFDGMITETKGTVLIKTAEELMNFSKGEENLMDAQVKAIADTGANVVVTGGKVADMALHYANKYNIMLVRLNSKWDLRRLCKTVGATALPRLTPPVLEEMGHCDSVYLSEVGDTQVVVFKHEKEDGAISTIVLRGSTDNLMDDIERAVDDGVNTFKVLTRDKRLVPGGGATEIELAKQITSYGETCPGLEQYAIKKFAEAFEAIPRALAENSGVKANEVISKLYAVHQEGNKNVGLDIEAEVPAVKDMLEAGILDTYLGKYWAIKLATNAAVTVLRVDQIIMAKPAGGPKPPSGKKDWDDDQND</sequence>
<dbReference type="EC" id="3.6.1.-" evidence="2"/>
<dbReference type="EMBL" id="CR858974">
    <property type="protein sequence ID" value="CAH91169.1"/>
    <property type="molecule type" value="mRNA"/>
</dbReference>
<dbReference type="RefSeq" id="NP_001125685.1">
    <property type="nucleotide sequence ID" value="NM_001132213.2"/>
</dbReference>
<dbReference type="SMR" id="Q5RAP1"/>
<dbReference type="FunCoup" id="Q5RAP1">
    <property type="interactions" value="3774"/>
</dbReference>
<dbReference type="STRING" id="9601.ENSPPYP00000012641"/>
<dbReference type="Ensembl" id="ENSPPYT00000055167.1">
    <property type="protein sequence ID" value="ENSPPYP00000043101.1"/>
    <property type="gene ID" value="ENSPPYG00000011318.3"/>
</dbReference>
<dbReference type="GeneID" id="100172606"/>
<dbReference type="KEGG" id="pon:100172606"/>
<dbReference type="CTD" id="10694"/>
<dbReference type="eggNOG" id="KOG0362">
    <property type="taxonomic scope" value="Eukaryota"/>
</dbReference>
<dbReference type="GeneTree" id="ENSGT00550000074783"/>
<dbReference type="InParanoid" id="Q5RAP1"/>
<dbReference type="OMA" id="WGLKYAV"/>
<dbReference type="OrthoDB" id="1748577at2759"/>
<dbReference type="Proteomes" id="UP000001595">
    <property type="component" value="Chromosome 21"/>
</dbReference>
<dbReference type="GO" id="GO:0044297">
    <property type="term" value="C:cell body"/>
    <property type="evidence" value="ECO:0007669"/>
    <property type="project" value="Ensembl"/>
</dbReference>
<dbReference type="GO" id="GO:0005813">
    <property type="term" value="C:centrosome"/>
    <property type="evidence" value="ECO:0007669"/>
    <property type="project" value="UniProtKB-SubCell"/>
</dbReference>
<dbReference type="GO" id="GO:0005832">
    <property type="term" value="C:chaperonin-containing T-complex"/>
    <property type="evidence" value="ECO:0000250"/>
    <property type="project" value="UniProtKB"/>
</dbReference>
<dbReference type="GO" id="GO:0005929">
    <property type="term" value="C:cilium"/>
    <property type="evidence" value="ECO:0007669"/>
    <property type="project" value="UniProtKB-KW"/>
</dbReference>
<dbReference type="GO" id="GO:0005874">
    <property type="term" value="C:microtubule"/>
    <property type="evidence" value="ECO:0007669"/>
    <property type="project" value="Ensembl"/>
</dbReference>
<dbReference type="GO" id="GO:0002199">
    <property type="term" value="C:zona pellucida receptor complex"/>
    <property type="evidence" value="ECO:0007669"/>
    <property type="project" value="Ensembl"/>
</dbReference>
<dbReference type="GO" id="GO:0005524">
    <property type="term" value="F:ATP binding"/>
    <property type="evidence" value="ECO:0007669"/>
    <property type="project" value="UniProtKB-KW"/>
</dbReference>
<dbReference type="GO" id="GO:0016887">
    <property type="term" value="F:ATP hydrolysis activity"/>
    <property type="evidence" value="ECO:0007669"/>
    <property type="project" value="InterPro"/>
</dbReference>
<dbReference type="GO" id="GO:0140662">
    <property type="term" value="F:ATP-dependent protein folding chaperone"/>
    <property type="evidence" value="ECO:0007669"/>
    <property type="project" value="InterPro"/>
</dbReference>
<dbReference type="GO" id="GO:0051082">
    <property type="term" value="F:unfolded protein binding"/>
    <property type="evidence" value="ECO:0007669"/>
    <property type="project" value="InterPro"/>
</dbReference>
<dbReference type="GO" id="GO:0007339">
    <property type="term" value="P:binding of sperm to zona pellucida"/>
    <property type="evidence" value="ECO:0007669"/>
    <property type="project" value="Ensembl"/>
</dbReference>
<dbReference type="GO" id="GO:0051086">
    <property type="term" value="P:chaperone mediated protein folding independent of cofactor"/>
    <property type="evidence" value="ECO:0007669"/>
    <property type="project" value="Ensembl"/>
</dbReference>
<dbReference type="GO" id="GO:0032212">
    <property type="term" value="P:positive regulation of telomere maintenance via telomerase"/>
    <property type="evidence" value="ECO:0007669"/>
    <property type="project" value="Ensembl"/>
</dbReference>
<dbReference type="GO" id="GO:0050821">
    <property type="term" value="P:protein stabilization"/>
    <property type="evidence" value="ECO:0007669"/>
    <property type="project" value="Ensembl"/>
</dbReference>
<dbReference type="CDD" id="cd03341">
    <property type="entry name" value="TCP1_theta"/>
    <property type="match status" value="1"/>
</dbReference>
<dbReference type="FunFam" id="1.10.560.10:FF:000083">
    <property type="entry name" value="T-complex protein 1 subunit theta"/>
    <property type="match status" value="1"/>
</dbReference>
<dbReference type="FunFam" id="3.50.7.10:FF:000008">
    <property type="entry name" value="T-complex protein 1 subunit theta"/>
    <property type="match status" value="1"/>
</dbReference>
<dbReference type="Gene3D" id="3.50.7.10">
    <property type="entry name" value="GroEL"/>
    <property type="match status" value="1"/>
</dbReference>
<dbReference type="Gene3D" id="1.10.560.10">
    <property type="entry name" value="GroEL-like equatorial domain"/>
    <property type="match status" value="1"/>
</dbReference>
<dbReference type="Gene3D" id="3.30.260.10">
    <property type="entry name" value="TCP-1-like chaperonin intermediate domain"/>
    <property type="match status" value="1"/>
</dbReference>
<dbReference type="InterPro" id="IPR012721">
    <property type="entry name" value="Chap_CCT_theta"/>
</dbReference>
<dbReference type="InterPro" id="IPR017998">
    <property type="entry name" value="Chaperone_TCP-1"/>
</dbReference>
<dbReference type="InterPro" id="IPR002194">
    <property type="entry name" value="Chaperonin_TCP-1_CS"/>
</dbReference>
<dbReference type="InterPro" id="IPR002423">
    <property type="entry name" value="Cpn60/GroEL/TCP-1"/>
</dbReference>
<dbReference type="InterPro" id="IPR027409">
    <property type="entry name" value="GroEL-like_apical_dom_sf"/>
</dbReference>
<dbReference type="InterPro" id="IPR027413">
    <property type="entry name" value="GROEL-like_equatorial_sf"/>
</dbReference>
<dbReference type="InterPro" id="IPR027410">
    <property type="entry name" value="TCP-1-like_intermed_sf"/>
</dbReference>
<dbReference type="NCBIfam" id="TIGR02346">
    <property type="entry name" value="chap_CCT_theta"/>
    <property type="match status" value="1"/>
</dbReference>
<dbReference type="PANTHER" id="PTHR11353">
    <property type="entry name" value="CHAPERONIN"/>
    <property type="match status" value="1"/>
</dbReference>
<dbReference type="Pfam" id="PF00118">
    <property type="entry name" value="Cpn60_TCP1"/>
    <property type="match status" value="1"/>
</dbReference>
<dbReference type="PRINTS" id="PR00304">
    <property type="entry name" value="TCOMPLEXTCP1"/>
</dbReference>
<dbReference type="SUPFAM" id="SSF52029">
    <property type="entry name" value="GroEL apical domain-like"/>
    <property type="match status" value="1"/>
</dbReference>
<dbReference type="SUPFAM" id="SSF48592">
    <property type="entry name" value="GroEL equatorial domain-like"/>
    <property type="match status" value="1"/>
</dbReference>
<dbReference type="SUPFAM" id="SSF54849">
    <property type="entry name" value="GroEL-intermediate domain like"/>
    <property type="match status" value="1"/>
</dbReference>
<dbReference type="PROSITE" id="PS00750">
    <property type="entry name" value="TCP1_1"/>
    <property type="match status" value="1"/>
</dbReference>
<dbReference type="PROSITE" id="PS00751">
    <property type="entry name" value="TCP1_2"/>
    <property type="match status" value="1"/>
</dbReference>
<dbReference type="PROSITE" id="PS00995">
    <property type="entry name" value="TCP1_3"/>
    <property type="match status" value="1"/>
</dbReference>
<organism>
    <name type="scientific">Pongo abelii</name>
    <name type="common">Sumatran orangutan</name>
    <name type="synonym">Pongo pygmaeus abelii</name>
    <dbReference type="NCBI Taxonomy" id="9601"/>
    <lineage>
        <taxon>Eukaryota</taxon>
        <taxon>Metazoa</taxon>
        <taxon>Chordata</taxon>
        <taxon>Craniata</taxon>
        <taxon>Vertebrata</taxon>
        <taxon>Euteleostomi</taxon>
        <taxon>Mammalia</taxon>
        <taxon>Eutheria</taxon>
        <taxon>Euarchontoglires</taxon>
        <taxon>Primates</taxon>
        <taxon>Haplorrhini</taxon>
        <taxon>Catarrhini</taxon>
        <taxon>Hominidae</taxon>
        <taxon>Pongo</taxon>
    </lineage>
</organism>
<accession>Q5RAP1</accession>
<gene>
    <name type="primary">CCT8</name>
</gene>
<keyword id="KW-0007">Acetylation</keyword>
<keyword id="KW-0067">ATP-binding</keyword>
<keyword id="KW-0966">Cell projection</keyword>
<keyword id="KW-0143">Chaperone</keyword>
<keyword id="KW-0969">Cilium</keyword>
<keyword id="KW-0963">Cytoplasm</keyword>
<keyword id="KW-0206">Cytoskeleton</keyword>
<keyword id="KW-0378">Hydrolase</keyword>
<keyword id="KW-1017">Isopeptide bond</keyword>
<keyword id="KW-0460">Magnesium</keyword>
<keyword id="KW-0479">Metal-binding</keyword>
<keyword id="KW-0547">Nucleotide-binding</keyword>
<keyword id="KW-0597">Phosphoprotein</keyword>
<keyword id="KW-1185">Reference proteome</keyword>
<keyword id="KW-0832">Ubl conjugation</keyword>